<dbReference type="EMBL" id="AE008923">
    <property type="protein sequence ID" value="AAM37936.1"/>
    <property type="status" value="ALT_INIT"/>
    <property type="molecule type" value="Genomic_DNA"/>
</dbReference>
<dbReference type="SMR" id="Q8PI07"/>
<dbReference type="KEGG" id="xac:XAC3091"/>
<dbReference type="eggNOG" id="COG3142">
    <property type="taxonomic scope" value="Bacteria"/>
</dbReference>
<dbReference type="HOGENOM" id="CLU_050555_3_2_6"/>
<dbReference type="Proteomes" id="UP000000576">
    <property type="component" value="Chromosome"/>
</dbReference>
<dbReference type="GO" id="GO:0005737">
    <property type="term" value="C:cytoplasm"/>
    <property type="evidence" value="ECO:0007669"/>
    <property type="project" value="UniProtKB-SubCell"/>
</dbReference>
<dbReference type="GO" id="GO:0005507">
    <property type="term" value="F:copper ion binding"/>
    <property type="evidence" value="ECO:0007669"/>
    <property type="project" value="TreeGrafter"/>
</dbReference>
<dbReference type="FunFam" id="3.20.20.380:FF:000001">
    <property type="entry name" value="Copper homeostasis protein CutC"/>
    <property type="match status" value="1"/>
</dbReference>
<dbReference type="Gene3D" id="3.20.20.380">
    <property type="entry name" value="Copper homeostasis (CutC) domain"/>
    <property type="match status" value="1"/>
</dbReference>
<dbReference type="HAMAP" id="MF_00795">
    <property type="entry name" value="CutC"/>
    <property type="match status" value="1"/>
</dbReference>
<dbReference type="InterPro" id="IPR005627">
    <property type="entry name" value="CutC-like"/>
</dbReference>
<dbReference type="InterPro" id="IPR036822">
    <property type="entry name" value="CutC-like_dom_sf"/>
</dbReference>
<dbReference type="PANTHER" id="PTHR12598">
    <property type="entry name" value="COPPER HOMEOSTASIS PROTEIN CUTC"/>
    <property type="match status" value="1"/>
</dbReference>
<dbReference type="PANTHER" id="PTHR12598:SF0">
    <property type="entry name" value="COPPER HOMEOSTASIS PROTEIN CUTC HOMOLOG"/>
    <property type="match status" value="1"/>
</dbReference>
<dbReference type="Pfam" id="PF03932">
    <property type="entry name" value="CutC"/>
    <property type="match status" value="1"/>
</dbReference>
<dbReference type="SUPFAM" id="SSF110395">
    <property type="entry name" value="CutC-like"/>
    <property type="match status" value="1"/>
</dbReference>
<evidence type="ECO:0000255" key="1">
    <source>
        <dbReference type="HAMAP-Rule" id="MF_00795"/>
    </source>
</evidence>
<evidence type="ECO:0000305" key="2"/>
<organism>
    <name type="scientific">Xanthomonas axonopodis pv. citri (strain 306)</name>
    <dbReference type="NCBI Taxonomy" id="190486"/>
    <lineage>
        <taxon>Bacteria</taxon>
        <taxon>Pseudomonadati</taxon>
        <taxon>Pseudomonadota</taxon>
        <taxon>Gammaproteobacteria</taxon>
        <taxon>Lysobacterales</taxon>
        <taxon>Lysobacteraceae</taxon>
        <taxon>Xanthomonas</taxon>
    </lineage>
</organism>
<comment type="subcellular location">
    <subcellularLocation>
        <location evidence="1">Cytoplasm</location>
    </subcellularLocation>
</comment>
<comment type="similarity">
    <text evidence="1">Belongs to the CutC family.</text>
</comment>
<comment type="caution">
    <text evidence="1">Once thought to be involved in copper homeostasis, experiments in E.coli have shown this is not the case.</text>
</comment>
<comment type="sequence caution" evidence="2">
    <conflict type="erroneous initiation">
        <sequence resource="EMBL-CDS" id="AAM37936"/>
    </conflict>
    <text>Extended N-terminus.</text>
</comment>
<protein>
    <recommendedName>
        <fullName evidence="1">PF03932 family protein CutC</fullName>
    </recommendedName>
</protein>
<keyword id="KW-0963">Cytoplasm</keyword>
<accession>Q8PI07</accession>
<reference key="1">
    <citation type="journal article" date="2002" name="Nature">
        <title>Comparison of the genomes of two Xanthomonas pathogens with differing host specificities.</title>
        <authorList>
            <person name="da Silva A.C.R."/>
            <person name="Ferro J.A."/>
            <person name="Reinach F.C."/>
            <person name="Farah C.S."/>
            <person name="Furlan L.R."/>
            <person name="Quaggio R.B."/>
            <person name="Monteiro-Vitorello C.B."/>
            <person name="Van Sluys M.A."/>
            <person name="Almeida N.F. Jr."/>
            <person name="Alves L.M.C."/>
            <person name="do Amaral A.M."/>
            <person name="Bertolini M.C."/>
            <person name="Camargo L.E.A."/>
            <person name="Camarotte G."/>
            <person name="Cannavan F."/>
            <person name="Cardozo J."/>
            <person name="Chambergo F."/>
            <person name="Ciapina L.P."/>
            <person name="Cicarelli R.M.B."/>
            <person name="Coutinho L.L."/>
            <person name="Cursino-Santos J.R."/>
            <person name="El-Dorry H."/>
            <person name="Faria J.B."/>
            <person name="Ferreira A.J.S."/>
            <person name="Ferreira R.C.C."/>
            <person name="Ferro M.I.T."/>
            <person name="Formighieri E.F."/>
            <person name="Franco M.C."/>
            <person name="Greggio C.C."/>
            <person name="Gruber A."/>
            <person name="Katsuyama A.M."/>
            <person name="Kishi L.T."/>
            <person name="Leite R.P."/>
            <person name="Lemos E.G.M."/>
            <person name="Lemos M.V.F."/>
            <person name="Locali E.C."/>
            <person name="Machado M.A."/>
            <person name="Madeira A.M.B.N."/>
            <person name="Martinez-Rossi N.M."/>
            <person name="Martins E.C."/>
            <person name="Meidanis J."/>
            <person name="Menck C.F.M."/>
            <person name="Miyaki C.Y."/>
            <person name="Moon D.H."/>
            <person name="Moreira L.M."/>
            <person name="Novo M.T.M."/>
            <person name="Okura V.K."/>
            <person name="Oliveira M.C."/>
            <person name="Oliveira V.R."/>
            <person name="Pereira H.A."/>
            <person name="Rossi A."/>
            <person name="Sena J.A.D."/>
            <person name="Silva C."/>
            <person name="de Souza R.F."/>
            <person name="Spinola L.A.F."/>
            <person name="Takita M.A."/>
            <person name="Tamura R.E."/>
            <person name="Teixeira E.C."/>
            <person name="Tezza R.I.D."/>
            <person name="Trindade dos Santos M."/>
            <person name="Truffi D."/>
            <person name="Tsai S.M."/>
            <person name="White F.F."/>
            <person name="Setubal J.C."/>
            <person name="Kitajima J.P."/>
        </authorList>
    </citation>
    <scope>NUCLEOTIDE SEQUENCE [LARGE SCALE GENOMIC DNA]</scope>
    <source>
        <strain>306</strain>
    </source>
</reference>
<proteinExistence type="inferred from homology"/>
<sequence>MGLEVAADSVASALAAQAGGAMRVELCGGLDGGGLTPSFGTLAVVRERLRIPLYVLIRPRVGDFVFDAAEVEVMRRDVEQCVRLGCDGVVLGALDRHGQVDLATMRVLMQAAGSLGVTFHRAIDVSADPSRVLEDAIALGCERVLTSGARASALEGIDTIAALVRQAAGRIGIMPGAGLSEHNIRALRQHTGAHEFHASARGVIAAQVPSPHPYIRDLGGDYQRTDTARVQRMVDALQQA</sequence>
<gene>
    <name evidence="1" type="primary">cutC</name>
    <name type="ordered locus">XAC3091</name>
</gene>
<name>CUTC_XANAC</name>
<feature type="chain" id="PRO_0000215082" description="PF03932 family protein CutC">
    <location>
        <begin position="1"/>
        <end position="240"/>
    </location>
</feature>